<gene>
    <name type="primary">ARI15</name>
    <name type="ordered locus">At5g63760</name>
    <name type="ORF">MBK5.24</name>
</gene>
<keyword id="KW-0479">Metal-binding</keyword>
<keyword id="KW-1185">Reference proteome</keyword>
<keyword id="KW-0677">Repeat</keyword>
<keyword id="KW-0808">Transferase</keyword>
<keyword id="KW-0833">Ubl conjugation pathway</keyword>
<keyword id="KW-0862">Zinc</keyword>
<keyword id="KW-0863">Zinc-finger</keyword>
<feature type="chain" id="PRO_0000356208" description="Probable E3 ubiquitin-protein ligase ARI15">
    <location>
        <begin position="1"/>
        <end position="452"/>
    </location>
</feature>
<feature type="zinc finger region" description="RING-type 1" evidence="3">
    <location>
        <begin position="26"/>
        <end position="88"/>
    </location>
</feature>
<feature type="zinc finger region" description="IBR-type" evidence="3">
    <location>
        <begin position="106"/>
        <end position="174"/>
    </location>
</feature>
<feature type="zinc finger region" description="RING-type 2; atypical" evidence="3">
    <location>
        <begin position="208"/>
        <end position="239"/>
    </location>
</feature>
<feature type="zinc finger region" description="RanBP2-type">
    <location>
        <begin position="414"/>
        <end position="445"/>
    </location>
</feature>
<feature type="region of interest" description="TRIAD supradomain" evidence="3">
    <location>
        <begin position="22"/>
        <end position="256"/>
    </location>
</feature>
<feature type="binding site" evidence="3">
    <location>
        <position position="26"/>
    </location>
    <ligand>
        <name>Zn(2+)</name>
        <dbReference type="ChEBI" id="CHEBI:29105"/>
        <label>1</label>
    </ligand>
</feature>
<feature type="binding site" evidence="3">
    <location>
        <position position="29"/>
    </location>
    <ligand>
        <name>Zn(2+)</name>
        <dbReference type="ChEBI" id="CHEBI:29105"/>
        <label>1</label>
    </ligand>
</feature>
<feature type="binding site" evidence="3">
    <location>
        <position position="54"/>
    </location>
    <ligand>
        <name>Zn(2+)</name>
        <dbReference type="ChEBI" id="CHEBI:29105"/>
        <label>2</label>
    </ligand>
</feature>
<feature type="binding site" evidence="3">
    <location>
        <position position="56"/>
    </location>
    <ligand>
        <name>Zn(2+)</name>
        <dbReference type="ChEBI" id="CHEBI:29105"/>
        <label>2</label>
    </ligand>
</feature>
<feature type="binding site" evidence="3">
    <location>
        <position position="59"/>
    </location>
    <ligand>
        <name>Zn(2+)</name>
        <dbReference type="ChEBI" id="CHEBI:29105"/>
        <label>1</label>
    </ligand>
</feature>
<feature type="binding site" evidence="3">
    <location>
        <position position="62"/>
    </location>
    <ligand>
        <name>Zn(2+)</name>
        <dbReference type="ChEBI" id="CHEBI:29105"/>
        <label>1</label>
    </ligand>
</feature>
<feature type="binding site" evidence="3">
    <location>
        <position position="83"/>
    </location>
    <ligand>
        <name>Zn(2+)</name>
        <dbReference type="ChEBI" id="CHEBI:29105"/>
        <label>2</label>
    </ligand>
</feature>
<feature type="binding site" evidence="3">
    <location>
        <position position="88"/>
    </location>
    <ligand>
        <name>Zn(2+)</name>
        <dbReference type="ChEBI" id="CHEBI:29105"/>
        <label>2</label>
    </ligand>
</feature>
<feature type="binding site" evidence="3">
    <location>
        <position position="128"/>
    </location>
    <ligand>
        <name>Zn(2+)</name>
        <dbReference type="ChEBI" id="CHEBI:29105"/>
        <label>3</label>
    </ligand>
</feature>
<feature type="binding site" evidence="3">
    <location>
        <position position="133"/>
    </location>
    <ligand>
        <name>Zn(2+)</name>
        <dbReference type="ChEBI" id="CHEBI:29105"/>
        <label>3</label>
    </ligand>
</feature>
<feature type="binding site" evidence="3">
    <location>
        <position position="154"/>
    </location>
    <ligand>
        <name>Zn(2+)</name>
        <dbReference type="ChEBI" id="CHEBI:29105"/>
        <label>3</label>
    </ligand>
</feature>
<feature type="binding site" evidence="3">
    <location>
        <position position="156"/>
    </location>
    <ligand>
        <name>Zn(2+)</name>
        <dbReference type="ChEBI" id="CHEBI:29105"/>
        <label>3</label>
    </ligand>
</feature>
<feature type="binding site" evidence="3">
    <location>
        <position position="161"/>
    </location>
    <ligand>
        <name>Zn(2+)</name>
        <dbReference type="ChEBI" id="CHEBI:29105"/>
        <label>4</label>
    </ligand>
</feature>
<feature type="binding site" evidence="3">
    <location>
        <position position="164"/>
    </location>
    <ligand>
        <name>Zn(2+)</name>
        <dbReference type="ChEBI" id="CHEBI:29105"/>
        <label>4</label>
    </ligand>
</feature>
<feature type="binding site" evidence="3">
    <location>
        <position position="169"/>
    </location>
    <ligand>
        <name>Zn(2+)</name>
        <dbReference type="ChEBI" id="CHEBI:29105"/>
        <label>4</label>
    </ligand>
</feature>
<feature type="binding site" evidence="3">
    <location>
        <position position="174"/>
    </location>
    <ligand>
        <name>Zn(2+)</name>
        <dbReference type="ChEBI" id="CHEBI:29105"/>
        <label>4</label>
    </ligand>
</feature>
<feature type="binding site" evidence="3">
    <location>
        <position position="208"/>
    </location>
    <ligand>
        <name>Zn(2+)</name>
        <dbReference type="ChEBI" id="CHEBI:29105"/>
        <label>5</label>
    </ligand>
</feature>
<feature type="binding site" evidence="3">
    <location>
        <position position="211"/>
    </location>
    <ligand>
        <name>Zn(2+)</name>
        <dbReference type="ChEBI" id="CHEBI:29105"/>
        <label>5</label>
    </ligand>
</feature>
<feature type="binding site" evidence="3">
    <location>
        <position position="229"/>
    </location>
    <ligand>
        <name>Zn(2+)</name>
        <dbReference type="ChEBI" id="CHEBI:29105"/>
        <label>5</label>
    </ligand>
</feature>
<feature type="binding site" evidence="3">
    <location>
        <position position="231"/>
    </location>
    <ligand>
        <name>Zn(2+)</name>
        <dbReference type="ChEBI" id="CHEBI:29105"/>
        <label>5</label>
    </ligand>
</feature>
<feature type="binding site" evidence="3">
    <location>
        <position position="236"/>
    </location>
    <ligand>
        <name>Zn(2+)</name>
        <dbReference type="ChEBI" id="CHEBI:29105"/>
        <label>6</label>
    </ligand>
</feature>
<feature type="binding site" evidence="3">
    <location>
        <position position="239"/>
    </location>
    <ligand>
        <name>Zn(2+)</name>
        <dbReference type="ChEBI" id="CHEBI:29105"/>
        <label>6</label>
    </ligand>
</feature>
<feature type="binding site" evidence="3">
    <location>
        <position position="246"/>
    </location>
    <ligand>
        <name>Zn(2+)</name>
        <dbReference type="ChEBI" id="CHEBI:29105"/>
        <label>6</label>
    </ligand>
</feature>
<feature type="binding site" evidence="3">
    <location>
        <position position="252"/>
    </location>
    <ligand>
        <name>Zn(2+)</name>
        <dbReference type="ChEBI" id="CHEBI:29105"/>
        <label>6</label>
    </ligand>
</feature>
<protein>
    <recommendedName>
        <fullName>Probable E3 ubiquitin-protein ligase ARI15</fullName>
        <ecNumber evidence="2">2.3.2.31</ecNumber>
    </recommendedName>
    <alternativeName>
        <fullName>ARIADNE-like protein ARI15</fullName>
    </alternativeName>
    <alternativeName>
        <fullName>Protein ariadne homolog 15</fullName>
    </alternativeName>
    <alternativeName>
        <fullName evidence="6">RING-type E3 ubiquitin transferase ARI15</fullName>
    </alternativeName>
</protein>
<dbReference type="EC" id="2.3.2.31" evidence="2"/>
<dbReference type="EMBL" id="AJ510218">
    <property type="protein sequence ID" value="CAD52897.1"/>
    <property type="molecule type" value="Genomic_DNA"/>
</dbReference>
<dbReference type="EMBL" id="AB005234">
    <property type="protein sequence ID" value="BAB10469.1"/>
    <property type="status" value="ALT_SEQ"/>
    <property type="molecule type" value="Genomic_DNA"/>
</dbReference>
<dbReference type="EMBL" id="CP002688">
    <property type="protein sequence ID" value="AED97793.1"/>
    <property type="molecule type" value="Genomic_DNA"/>
</dbReference>
<dbReference type="EMBL" id="CP002688">
    <property type="protein sequence ID" value="AED97794.1"/>
    <property type="molecule type" value="Genomic_DNA"/>
</dbReference>
<dbReference type="EMBL" id="CP002688">
    <property type="protein sequence ID" value="ANM70851.1"/>
    <property type="molecule type" value="Genomic_DNA"/>
</dbReference>
<dbReference type="EMBL" id="BT022004">
    <property type="protein sequence ID" value="AAY25416.1"/>
    <property type="molecule type" value="mRNA"/>
</dbReference>
<dbReference type="EMBL" id="BT029215">
    <property type="protein sequence ID" value="ABJ17150.1"/>
    <property type="molecule type" value="mRNA"/>
</dbReference>
<dbReference type="RefSeq" id="NP_001332429.1">
    <property type="nucleotide sequence ID" value="NM_001345608.1"/>
</dbReference>
<dbReference type="RefSeq" id="NP_201181.2">
    <property type="nucleotide sequence ID" value="NM_125771.3"/>
</dbReference>
<dbReference type="RefSeq" id="NP_974987.1">
    <property type="nucleotide sequence ID" value="NM_203258.2"/>
</dbReference>
<dbReference type="SMR" id="Q84RQ8"/>
<dbReference type="STRING" id="3702.Q84RQ8"/>
<dbReference type="PaxDb" id="3702-AT5G63760.2"/>
<dbReference type="ProteomicsDB" id="245189"/>
<dbReference type="EnsemblPlants" id="AT5G63760.1">
    <property type="protein sequence ID" value="AT5G63760.1"/>
    <property type="gene ID" value="AT5G63760"/>
</dbReference>
<dbReference type="EnsemblPlants" id="AT5G63760.2">
    <property type="protein sequence ID" value="AT5G63760.2"/>
    <property type="gene ID" value="AT5G63760"/>
</dbReference>
<dbReference type="EnsemblPlants" id="AT5G63760.3">
    <property type="protein sequence ID" value="AT5G63760.3"/>
    <property type="gene ID" value="AT5G63760"/>
</dbReference>
<dbReference type="GeneID" id="836496"/>
<dbReference type="Gramene" id="AT5G63760.1">
    <property type="protein sequence ID" value="AT5G63760.1"/>
    <property type="gene ID" value="AT5G63760"/>
</dbReference>
<dbReference type="Gramene" id="AT5G63760.2">
    <property type="protein sequence ID" value="AT5G63760.2"/>
    <property type="gene ID" value="AT5G63760"/>
</dbReference>
<dbReference type="Gramene" id="AT5G63760.3">
    <property type="protein sequence ID" value="AT5G63760.3"/>
    <property type="gene ID" value="AT5G63760"/>
</dbReference>
<dbReference type="KEGG" id="ath:AT5G63760"/>
<dbReference type="Araport" id="AT5G63760"/>
<dbReference type="TAIR" id="AT5G63760">
    <property type="gene designation" value="ARI15"/>
</dbReference>
<dbReference type="eggNOG" id="KOG1815">
    <property type="taxonomic scope" value="Eukaryota"/>
</dbReference>
<dbReference type="HOGENOM" id="CLU_009823_3_2_1"/>
<dbReference type="InParanoid" id="Q84RQ8"/>
<dbReference type="OMA" id="PKWKLAN"/>
<dbReference type="PhylomeDB" id="Q84RQ8"/>
<dbReference type="UniPathway" id="UPA00143"/>
<dbReference type="PRO" id="PR:Q84RQ8"/>
<dbReference type="Proteomes" id="UP000006548">
    <property type="component" value="Chromosome 5"/>
</dbReference>
<dbReference type="ExpressionAtlas" id="Q84RQ8">
    <property type="expression patterns" value="baseline and differential"/>
</dbReference>
<dbReference type="GO" id="GO:0004842">
    <property type="term" value="F:ubiquitin-protein transferase activity"/>
    <property type="evidence" value="ECO:0007669"/>
    <property type="project" value="InterPro"/>
</dbReference>
<dbReference type="GO" id="GO:0008270">
    <property type="term" value="F:zinc ion binding"/>
    <property type="evidence" value="ECO:0007669"/>
    <property type="project" value="UniProtKB-KW"/>
</dbReference>
<dbReference type="GO" id="GO:0016567">
    <property type="term" value="P:protein ubiquitination"/>
    <property type="evidence" value="ECO:0007669"/>
    <property type="project" value="UniProtKB-UniPathway"/>
</dbReference>
<dbReference type="CDD" id="cd20346">
    <property type="entry name" value="BRcat_RBR_ANKIB1"/>
    <property type="match status" value="1"/>
</dbReference>
<dbReference type="FunFam" id="1.20.120.1750:FF:000049">
    <property type="entry name" value="Probable E3 ubiquitin-protein ligase ARI15"/>
    <property type="match status" value="1"/>
</dbReference>
<dbReference type="FunFam" id="3.30.40.10:FF:000892">
    <property type="entry name" value="Probable E3 ubiquitin-protein ligase ARI15"/>
    <property type="match status" value="1"/>
</dbReference>
<dbReference type="Gene3D" id="1.20.120.1750">
    <property type="match status" value="1"/>
</dbReference>
<dbReference type="Gene3D" id="3.30.40.10">
    <property type="entry name" value="Zinc/RING finger domain, C3HC4 (zinc finger)"/>
    <property type="match status" value="1"/>
</dbReference>
<dbReference type="InterPro" id="IPR031127">
    <property type="entry name" value="E3_UB_ligase_RBR"/>
</dbReference>
<dbReference type="InterPro" id="IPR002867">
    <property type="entry name" value="IBR_dom"/>
</dbReference>
<dbReference type="InterPro" id="IPR044066">
    <property type="entry name" value="TRIAD_supradom"/>
</dbReference>
<dbReference type="InterPro" id="IPR001876">
    <property type="entry name" value="Znf_RanBP2"/>
</dbReference>
<dbReference type="InterPro" id="IPR001841">
    <property type="entry name" value="Znf_RING"/>
</dbReference>
<dbReference type="InterPro" id="IPR013083">
    <property type="entry name" value="Znf_RING/FYVE/PHD"/>
</dbReference>
<dbReference type="PANTHER" id="PTHR11685">
    <property type="entry name" value="RBR FAMILY RING FINGER AND IBR DOMAIN-CONTAINING"/>
    <property type="match status" value="1"/>
</dbReference>
<dbReference type="Pfam" id="PF01485">
    <property type="entry name" value="IBR"/>
    <property type="match status" value="1"/>
</dbReference>
<dbReference type="SMART" id="SM00647">
    <property type="entry name" value="IBR"/>
    <property type="match status" value="2"/>
</dbReference>
<dbReference type="SUPFAM" id="SSF57850">
    <property type="entry name" value="RING/U-box"/>
    <property type="match status" value="3"/>
</dbReference>
<dbReference type="PROSITE" id="PS51873">
    <property type="entry name" value="TRIAD"/>
    <property type="match status" value="1"/>
</dbReference>
<dbReference type="PROSITE" id="PS01358">
    <property type="entry name" value="ZF_RANBP2_1"/>
    <property type="match status" value="1"/>
</dbReference>
<dbReference type="PROSITE" id="PS00518">
    <property type="entry name" value="ZF_RING_1"/>
    <property type="match status" value="1"/>
</dbReference>
<dbReference type="PROSITE" id="PS50089">
    <property type="entry name" value="ZF_RING_2"/>
    <property type="match status" value="1"/>
</dbReference>
<evidence type="ECO:0000250" key="1"/>
<evidence type="ECO:0000250" key="2">
    <source>
        <dbReference type="UniProtKB" id="Q9Y4X5"/>
    </source>
</evidence>
<evidence type="ECO:0000255" key="3">
    <source>
        <dbReference type="PROSITE-ProRule" id="PRU01221"/>
    </source>
</evidence>
<evidence type="ECO:0000269" key="4">
    <source>
    </source>
</evidence>
<evidence type="ECO:0000269" key="5">
    <source>
    </source>
</evidence>
<evidence type="ECO:0000305" key="6"/>
<proteinExistence type="evidence at transcript level"/>
<reference key="1">
    <citation type="journal article" date="2003" name="Plant Physiol.">
        <title>Identification and characterization of the ARIADNE gene family in Arabidopsis. A group of putative E3 ligases.</title>
        <authorList>
            <person name="Mladek C."/>
            <person name="Guger K."/>
            <person name="Hauser M.-T."/>
        </authorList>
    </citation>
    <scope>NUCLEOTIDE SEQUENCE [GENOMIC DNA]</scope>
    <scope>TISSUE SPECIFICITY</scope>
    <scope>NOMENCLATURE</scope>
    <scope>GENE FAMILY</scope>
    <source>
        <strain>cv. Columbia</strain>
    </source>
</reference>
<reference key="2">
    <citation type="journal article" date="1997" name="DNA Res.">
        <title>Structural analysis of Arabidopsis thaliana chromosome 5. I. Sequence features of the 1.6 Mb regions covered by twenty physically assigned P1 clones.</title>
        <authorList>
            <person name="Sato S."/>
            <person name="Kotani H."/>
            <person name="Nakamura Y."/>
            <person name="Kaneko T."/>
            <person name="Asamizu E."/>
            <person name="Fukami M."/>
            <person name="Miyajima N."/>
            <person name="Tabata S."/>
        </authorList>
    </citation>
    <scope>NUCLEOTIDE SEQUENCE [LARGE SCALE GENOMIC DNA]</scope>
    <source>
        <strain>cv. Columbia</strain>
    </source>
</reference>
<reference key="3">
    <citation type="journal article" date="2017" name="Plant J.">
        <title>Araport11: a complete reannotation of the Arabidopsis thaliana reference genome.</title>
        <authorList>
            <person name="Cheng C.Y."/>
            <person name="Krishnakumar V."/>
            <person name="Chan A.P."/>
            <person name="Thibaud-Nissen F."/>
            <person name="Schobel S."/>
            <person name="Town C.D."/>
        </authorList>
    </citation>
    <scope>GENOME REANNOTATION</scope>
    <source>
        <strain>cv. Columbia</strain>
    </source>
</reference>
<reference key="4">
    <citation type="submission" date="2006-10" db="EMBL/GenBank/DDBJ databases">
        <title>Arabidopsis ORF clones.</title>
        <authorList>
            <person name="Quinitio C."/>
            <person name="Chen H."/>
            <person name="Kim C.J."/>
            <person name="Shinn P."/>
            <person name="Ecker J.R."/>
        </authorList>
    </citation>
    <scope>NUCLEOTIDE SEQUENCE [LARGE SCALE MRNA]</scope>
    <source>
        <strain>cv. Columbia</strain>
    </source>
</reference>
<reference key="5">
    <citation type="journal article" date="2002" name="Mol. Biol. Evol.">
        <title>Comparative genomics of the RBR family, including the Parkinson's disease-related gene parkin and the genes of the ariadne subfamily.</title>
        <authorList>
            <person name="Marin I."/>
            <person name="Ferrus A."/>
        </authorList>
    </citation>
    <scope>FUNCTION</scope>
</reference>
<comment type="function">
    <text evidence="1 4">Might act as an E3 ubiquitin-protein ligase, or as part of E3 complex, which accepts ubiquitin from specific E2 ubiquitin-conjugating enzymes and then transfers it to substrates.</text>
</comment>
<comment type="catalytic activity">
    <reaction evidence="2">
        <text>[E2 ubiquitin-conjugating enzyme]-S-ubiquitinyl-L-cysteine + [acceptor protein]-L-lysine = [E2 ubiquitin-conjugating enzyme]-L-cysteine + [acceptor protein]-N(6)-ubiquitinyl-L-lysine.</text>
        <dbReference type="EC" id="2.3.2.31"/>
    </reaction>
</comment>
<comment type="cofactor">
    <cofactor evidence="6">
        <name>Zn(2+)</name>
        <dbReference type="ChEBI" id="CHEBI:29105"/>
    </cofactor>
    <text evidence="6">Binds 4 Zn(2+) ions per subunit.</text>
</comment>
<comment type="pathway">
    <text>Protein modification; protein ubiquitination.</text>
</comment>
<comment type="tissue specificity">
    <text evidence="5">Ubiquitous.</text>
</comment>
<comment type="domain">
    <text evidence="2">Members of the RBR family are atypical E3 ligases. They interact with the E2 conjugating enzyme UBE2L3 and function like HECT-type E3 enzymes: they bind E2s via the first RING-type zinc finger, but require an obligate trans-thiolation step during the ubiquitin transfer, requiring a conserved active site Cys residue in the second RING-type zinc finger. The active site probably forms a thioester intermediate with ubiquitin taken from the active-site cysteine of the E2 before ultimately transferring it to a Lys residue on the substrate.</text>
</comment>
<comment type="similarity">
    <text evidence="6">Belongs to the RBR family. Ariadne subfamily.</text>
</comment>
<comment type="caution">
    <text evidence="6">Lacks two Cys residues in the RING-type zinc finger domain 2 that are conserved features of the family.</text>
</comment>
<comment type="sequence caution" evidence="6">
    <conflict type="erroneous gene model prediction">
        <sequence resource="EMBL-CDS" id="BAB10469"/>
    </conflict>
</comment>
<organism>
    <name type="scientific">Arabidopsis thaliana</name>
    <name type="common">Mouse-ear cress</name>
    <dbReference type="NCBI Taxonomy" id="3702"/>
    <lineage>
        <taxon>Eukaryota</taxon>
        <taxon>Viridiplantae</taxon>
        <taxon>Streptophyta</taxon>
        <taxon>Embryophyta</taxon>
        <taxon>Tracheophyta</taxon>
        <taxon>Spermatophyta</taxon>
        <taxon>Magnoliopsida</taxon>
        <taxon>eudicotyledons</taxon>
        <taxon>Gunneridae</taxon>
        <taxon>Pentapetalae</taxon>
        <taxon>rosids</taxon>
        <taxon>malvids</taxon>
        <taxon>Brassicales</taxon>
        <taxon>Brassicaceae</taxon>
        <taxon>Camelineae</taxon>
        <taxon>Arabidopsis</taxon>
    </lineage>
</organism>
<accession>Q84RQ8</accession>
<accession>Q9FFN8</accession>
<sequence>MEKLMTESGLKPVVIDSNQDLSRVYCGICSNIGDDDYDGDAVVVDGDLISTPFCSHKFCKACWSKYLKKNFFSVEKNHTAISCPDRDCRAAVGPETVEKLTVRDQAMYELYILKSYREKYLGWKLKLCPARGCNYVIEFHLASEDEEHSLNIVCLCGHIFCWRCMLESHRPVTCNNASDWLSRDLEKLIEEVDKPSTVSWIDANTKPCPHCFIPVEIDGERPWAQFLTCVCSGRFCWKCFRSPETHGTSGSCLAPARSSNVGFNHWNRAKPGISCLDLWNASQVNLVNAKYELEAFEESIIKKPSDLKEQDVKVLREGLMLIVQCRQFLKWSCAYDYIHTEYDMAKREYLRFLQQNASGIVHSFSQSIKEETEAKELTCGKLLSETTNIGNFFYHFIKTLREGLPEVQAESYDNYGGPYWLCDRCTYGNSWFQRACKMCCDPTASKMDELSD</sequence>
<name>ARI15_ARATH</name>